<accession>Q57GZ6</accession>
<gene>
    <name evidence="1" type="primary">lamB</name>
    <name type="ordered locus">SCH_4110</name>
</gene>
<comment type="function">
    <text evidence="1">Involved in the transport of maltose and maltodextrins.</text>
</comment>
<comment type="catalytic activity">
    <reaction evidence="1">
        <text>beta-maltose(in) = beta-maltose(out)</text>
        <dbReference type="Rhea" id="RHEA:29731"/>
        <dbReference type="ChEBI" id="CHEBI:18147"/>
    </reaction>
</comment>
<comment type="subunit">
    <text evidence="1">Homotrimer formed of three 18-stranded antiparallel beta-barrels, containing three independent channels.</text>
</comment>
<comment type="subcellular location">
    <subcellularLocation>
        <location evidence="1">Cell outer membrane</location>
        <topology evidence="1">Multi-pass membrane protein</topology>
    </subcellularLocation>
</comment>
<comment type="induction">
    <text evidence="1">By maltose.</text>
</comment>
<comment type="similarity">
    <text evidence="1">Belongs to the porin LamB (TC 1.B.3) family.</text>
</comment>
<protein>
    <recommendedName>
        <fullName evidence="1">Maltoporin</fullName>
    </recommendedName>
    <alternativeName>
        <fullName evidence="1">Maltose-inducible porin</fullName>
    </alternativeName>
</protein>
<sequence>MMITLRKLPLAVAVAAGVMSAQAMAVDFHGYARSGIGWTGSGGEQQCFQATGAQSKYRLGNECETYAELKLGQEVWKEGDKSFYFDTNVAYSVNQQNDWESTDPAFREANVQGKNLIEWLPGSTIWAGKRFYQRHDVHMIDFYYWDISGPGAGIENIDLGFGKLSLAATRSTEAGGSYTFSSQNIYDEVKDTANDVFDVRLAGLQTNPDGVLELGVDYGRANTTDGYKLADGASKDGWMFTAEHTQSMLKGYNKFVVQYATDAMTTQGKGQARGSDGSSSFTEELPDGTKINYANKVINNNGDMWRILDHGAISLGDKWDLMYVGMYQNIDWDNNLGTEWWTVGVRPMYKWTPIMSTLLEVGYDNVKSQQTGDRNNQYKITLAQQWQAGDSIWSRPAIRIFATYAKWDEKWGYIKDGDNISRYAAATNSGISTNSRGDSDEWTFGAQMEIWW</sequence>
<name>LAMB_SALCH</name>
<keyword id="KW-0998">Cell outer membrane</keyword>
<keyword id="KW-0406">Ion transport</keyword>
<keyword id="KW-0472">Membrane</keyword>
<keyword id="KW-0626">Porin</keyword>
<keyword id="KW-0732">Signal</keyword>
<keyword id="KW-0762">Sugar transport</keyword>
<keyword id="KW-0812">Transmembrane</keyword>
<keyword id="KW-1134">Transmembrane beta strand</keyword>
<keyword id="KW-0813">Transport</keyword>
<reference key="1">
    <citation type="journal article" date="2005" name="Nucleic Acids Res.">
        <title>The genome sequence of Salmonella enterica serovar Choleraesuis, a highly invasive and resistant zoonotic pathogen.</title>
        <authorList>
            <person name="Chiu C.-H."/>
            <person name="Tang P."/>
            <person name="Chu C."/>
            <person name="Hu S."/>
            <person name="Bao Q."/>
            <person name="Yu J."/>
            <person name="Chou Y.-Y."/>
            <person name="Wang H.-S."/>
            <person name="Lee Y.-S."/>
        </authorList>
    </citation>
    <scope>NUCLEOTIDE SEQUENCE [LARGE SCALE GENOMIC DNA]</scope>
    <source>
        <strain>SC-B67</strain>
    </source>
</reference>
<dbReference type="EMBL" id="AE017220">
    <property type="protein sequence ID" value="AAX68016.1"/>
    <property type="molecule type" value="Genomic_DNA"/>
</dbReference>
<dbReference type="RefSeq" id="WP_000973642.1">
    <property type="nucleotide sequence ID" value="NC_006905.1"/>
</dbReference>
<dbReference type="SMR" id="Q57GZ6"/>
<dbReference type="KEGG" id="sec:SCH_4110"/>
<dbReference type="HOGENOM" id="CLU_032473_4_1_6"/>
<dbReference type="Proteomes" id="UP000000538">
    <property type="component" value="Chromosome"/>
</dbReference>
<dbReference type="GO" id="GO:0009279">
    <property type="term" value="C:cell outer membrane"/>
    <property type="evidence" value="ECO:0007669"/>
    <property type="project" value="UniProtKB-SubCell"/>
</dbReference>
<dbReference type="GO" id="GO:0046930">
    <property type="term" value="C:pore complex"/>
    <property type="evidence" value="ECO:0007669"/>
    <property type="project" value="UniProtKB-KW"/>
</dbReference>
<dbReference type="GO" id="GO:0042958">
    <property type="term" value="F:maltodextrin transmembrane transporter activity"/>
    <property type="evidence" value="ECO:0007669"/>
    <property type="project" value="InterPro"/>
</dbReference>
<dbReference type="GO" id="GO:0015481">
    <property type="term" value="F:maltose transporting porin activity"/>
    <property type="evidence" value="ECO:0007669"/>
    <property type="project" value="InterPro"/>
</dbReference>
<dbReference type="GO" id="GO:0006811">
    <property type="term" value="P:monoatomic ion transport"/>
    <property type="evidence" value="ECO:0007669"/>
    <property type="project" value="UniProtKB-KW"/>
</dbReference>
<dbReference type="CDD" id="cd01346">
    <property type="entry name" value="Maltoporin-like"/>
    <property type="match status" value="1"/>
</dbReference>
<dbReference type="FunFam" id="2.40.170.10:FF:000001">
    <property type="entry name" value="Maltoporin"/>
    <property type="match status" value="1"/>
</dbReference>
<dbReference type="Gene3D" id="2.40.170.10">
    <property type="entry name" value="Porin, LamB type"/>
    <property type="match status" value="1"/>
</dbReference>
<dbReference type="HAMAP" id="MF_01301">
    <property type="entry name" value="LamB"/>
    <property type="match status" value="1"/>
</dbReference>
<dbReference type="InterPro" id="IPR050286">
    <property type="entry name" value="G_neg_Bact_CarbUptk_Porin"/>
</dbReference>
<dbReference type="InterPro" id="IPR023738">
    <property type="entry name" value="Maltoporin"/>
</dbReference>
<dbReference type="InterPro" id="IPR003192">
    <property type="entry name" value="Porin_LamB"/>
</dbReference>
<dbReference type="InterPro" id="IPR036998">
    <property type="entry name" value="Porin_LamB_sf"/>
</dbReference>
<dbReference type="NCBIfam" id="NF006860">
    <property type="entry name" value="PRK09360.1"/>
    <property type="match status" value="1"/>
</dbReference>
<dbReference type="PANTHER" id="PTHR38762">
    <property type="entry name" value="CRYPTIC OUTER MEMBRANE PORIN BGLH-RELATED"/>
    <property type="match status" value="1"/>
</dbReference>
<dbReference type="PANTHER" id="PTHR38762:SF1">
    <property type="entry name" value="CRYPTIC OUTER MEMBRANE PORIN BGLH-RELATED"/>
    <property type="match status" value="1"/>
</dbReference>
<dbReference type="Pfam" id="PF02264">
    <property type="entry name" value="LamB"/>
    <property type="match status" value="1"/>
</dbReference>
<dbReference type="SUPFAM" id="SSF56935">
    <property type="entry name" value="Porins"/>
    <property type="match status" value="1"/>
</dbReference>
<organism>
    <name type="scientific">Salmonella choleraesuis (strain SC-B67)</name>
    <dbReference type="NCBI Taxonomy" id="321314"/>
    <lineage>
        <taxon>Bacteria</taxon>
        <taxon>Pseudomonadati</taxon>
        <taxon>Pseudomonadota</taxon>
        <taxon>Gammaproteobacteria</taxon>
        <taxon>Enterobacterales</taxon>
        <taxon>Enterobacteriaceae</taxon>
        <taxon>Salmonella</taxon>
    </lineage>
</organism>
<evidence type="ECO:0000255" key="1">
    <source>
        <dbReference type="HAMAP-Rule" id="MF_01301"/>
    </source>
</evidence>
<feature type="signal peptide" evidence="1">
    <location>
        <begin position="1"/>
        <end position="25"/>
    </location>
</feature>
<feature type="chain" id="PRO_0000228855" description="Maltoporin">
    <location>
        <begin position="26"/>
        <end position="452"/>
    </location>
</feature>
<feature type="site" description="Greasy slide, important in sugar transport" evidence="1">
    <location>
        <position position="31"/>
    </location>
</feature>
<feature type="site" description="Greasy slide, important in sugar transport" evidence="1">
    <location>
        <position position="66"/>
    </location>
</feature>
<feature type="site" description="Greasy slide, important in sugar transport" evidence="1">
    <location>
        <position position="99"/>
    </location>
</feature>
<feature type="site" description="Important in sugar transport" evidence="1">
    <location>
        <position position="143"/>
    </location>
</feature>
<feature type="site" description="Greasy slide, important in sugar transport" evidence="1">
    <location>
        <position position="252"/>
    </location>
</feature>
<feature type="site" description="Greasy slide, important in sugar transport" evidence="1">
    <location>
        <position position="393"/>
    </location>
</feature>
<feature type="site" description="Greasy slide, important in sugar transport" evidence="1">
    <location>
        <position position="451"/>
    </location>
</feature>
<proteinExistence type="inferred from homology"/>